<gene>
    <name type="primary">GMEB1</name>
</gene>
<dbReference type="EMBL" id="AF099013">
    <property type="protein sequence ID" value="AAD39355.1"/>
    <property type="molecule type" value="mRNA"/>
</dbReference>
<dbReference type="EMBL" id="AF173868">
    <property type="protein sequence ID" value="AAD51352.1"/>
    <property type="molecule type" value="mRNA"/>
</dbReference>
<dbReference type="EMBL" id="AF203694">
    <property type="protein sequence ID" value="AAG01189.1"/>
    <property type="molecule type" value="mRNA"/>
</dbReference>
<dbReference type="EMBL" id="AK000892">
    <property type="protein sequence ID" value="BAA91410.1"/>
    <property type="molecule type" value="mRNA"/>
</dbReference>
<dbReference type="EMBL" id="AL645729">
    <property type="status" value="NOT_ANNOTATED_CDS"/>
    <property type="molecule type" value="Genomic_DNA"/>
</dbReference>
<dbReference type="EMBL" id="CH471059">
    <property type="protein sequence ID" value="EAX07677.1"/>
    <property type="molecule type" value="Genomic_DNA"/>
</dbReference>
<dbReference type="EMBL" id="BC001473">
    <property type="protein sequence ID" value="AAH01473.1"/>
    <property type="molecule type" value="mRNA"/>
</dbReference>
<dbReference type="CCDS" id="CCDS327.1">
    <molecule id="Q9Y692-1"/>
</dbReference>
<dbReference type="CCDS" id="CCDS328.1">
    <molecule id="Q9Y692-2"/>
</dbReference>
<dbReference type="RefSeq" id="NP_001306603.1">
    <molecule id="Q9Y692-2"/>
    <property type="nucleotide sequence ID" value="NM_001319674.2"/>
</dbReference>
<dbReference type="RefSeq" id="NP_006573.2">
    <molecule id="Q9Y692-1"/>
    <property type="nucleotide sequence ID" value="NM_006582.3"/>
</dbReference>
<dbReference type="RefSeq" id="NP_077808.1">
    <molecule id="Q9Y692-2"/>
    <property type="nucleotide sequence ID" value="NM_024482.3"/>
</dbReference>
<dbReference type="RefSeq" id="XP_011538820.1">
    <molecule id="Q9Y692-1"/>
    <property type="nucleotide sequence ID" value="XM_011540518.3"/>
</dbReference>
<dbReference type="RefSeq" id="XP_011538821.1">
    <molecule id="Q9Y692-1"/>
    <property type="nucleotide sequence ID" value="XM_011540519.3"/>
</dbReference>
<dbReference type="RefSeq" id="XP_011538823.1">
    <molecule id="Q9Y692-2"/>
    <property type="nucleotide sequence ID" value="XM_011540521.4"/>
</dbReference>
<dbReference type="RefSeq" id="XP_016855576.1">
    <molecule id="Q9Y692-1"/>
    <property type="nucleotide sequence ID" value="XM_017000087.2"/>
</dbReference>
<dbReference type="RefSeq" id="XP_047294092.1">
    <molecule id="Q9Y692-1"/>
    <property type="nucleotide sequence ID" value="XM_047438136.1"/>
</dbReference>
<dbReference type="RefSeq" id="XP_047294143.1">
    <molecule id="Q9Y692-1"/>
    <property type="nucleotide sequence ID" value="XM_047438187.1"/>
</dbReference>
<dbReference type="RefSeq" id="XP_047294189.1">
    <molecule id="Q9Y692-2"/>
    <property type="nucleotide sequence ID" value="XM_047438233.1"/>
</dbReference>
<dbReference type="RefSeq" id="XP_047294239.1">
    <molecule id="Q9Y692-2"/>
    <property type="nucleotide sequence ID" value="XM_047438283.1"/>
</dbReference>
<dbReference type="RefSeq" id="XP_047294272.1">
    <molecule id="Q9Y692-2"/>
    <property type="nucleotide sequence ID" value="XM_047438316.1"/>
</dbReference>
<dbReference type="RefSeq" id="XP_054189872.1">
    <molecule id="Q9Y692-1"/>
    <property type="nucleotide sequence ID" value="XM_054333897.1"/>
</dbReference>
<dbReference type="RefSeq" id="XP_054189873.1">
    <molecule id="Q9Y692-1"/>
    <property type="nucleotide sequence ID" value="XM_054333898.1"/>
</dbReference>
<dbReference type="RefSeq" id="XP_054189874.1">
    <molecule id="Q9Y692-1"/>
    <property type="nucleotide sequence ID" value="XM_054333899.1"/>
</dbReference>
<dbReference type="RefSeq" id="XP_054189875.1">
    <molecule id="Q9Y692-1"/>
    <property type="nucleotide sequence ID" value="XM_054333900.1"/>
</dbReference>
<dbReference type="RefSeq" id="XP_054189876.1">
    <molecule id="Q9Y692-1"/>
    <property type="nucleotide sequence ID" value="XM_054333901.1"/>
</dbReference>
<dbReference type="RefSeq" id="XP_054189877.1">
    <molecule id="Q9Y692-2"/>
    <property type="nucleotide sequence ID" value="XM_054333902.1"/>
</dbReference>
<dbReference type="RefSeq" id="XP_054189878.1">
    <molecule id="Q9Y692-2"/>
    <property type="nucleotide sequence ID" value="XM_054333903.1"/>
</dbReference>
<dbReference type="RefSeq" id="XP_054189879.1">
    <molecule id="Q9Y692-2"/>
    <property type="nucleotide sequence ID" value="XM_054333904.1"/>
</dbReference>
<dbReference type="RefSeq" id="XP_054189880.1">
    <molecule id="Q9Y692-2"/>
    <property type="nucleotide sequence ID" value="XM_054333905.1"/>
</dbReference>
<dbReference type="PDB" id="1OQJ">
    <property type="method" value="X-ray"/>
    <property type="resolution" value="1.55 A"/>
    <property type="chains" value="A/B=89-182"/>
</dbReference>
<dbReference type="PDBsum" id="1OQJ"/>
<dbReference type="SMR" id="Q9Y692"/>
<dbReference type="BioGRID" id="115930">
    <property type="interactions" value="43"/>
</dbReference>
<dbReference type="FunCoup" id="Q9Y692">
    <property type="interactions" value="3675"/>
</dbReference>
<dbReference type="IntAct" id="Q9Y692">
    <property type="interactions" value="33"/>
</dbReference>
<dbReference type="MINT" id="Q9Y692"/>
<dbReference type="STRING" id="9606.ENSP00000294409"/>
<dbReference type="GlyCosmos" id="Q9Y692">
    <property type="glycosylation" value="13 sites, 2 glycans"/>
</dbReference>
<dbReference type="GlyGen" id="Q9Y692">
    <property type="glycosylation" value="13 sites, 2 O-linked glycans (13 sites)"/>
</dbReference>
<dbReference type="iPTMnet" id="Q9Y692"/>
<dbReference type="PhosphoSitePlus" id="Q9Y692"/>
<dbReference type="BioMuta" id="GMEB1"/>
<dbReference type="DMDM" id="22001627"/>
<dbReference type="jPOST" id="Q9Y692"/>
<dbReference type="MassIVE" id="Q9Y692"/>
<dbReference type="PaxDb" id="9606-ENSP00000294409"/>
<dbReference type="PeptideAtlas" id="Q9Y692"/>
<dbReference type="ProteomicsDB" id="86625">
    <molecule id="Q9Y692-1"/>
</dbReference>
<dbReference type="ProteomicsDB" id="86626">
    <molecule id="Q9Y692-2"/>
</dbReference>
<dbReference type="Pumba" id="Q9Y692"/>
<dbReference type="Antibodypedia" id="30978">
    <property type="antibodies" value="166 antibodies from 24 providers"/>
</dbReference>
<dbReference type="DNASU" id="10691"/>
<dbReference type="Ensembl" id="ENST00000294409.2">
    <molecule id="Q9Y692-1"/>
    <property type="protein sequence ID" value="ENSP00000294409.2"/>
    <property type="gene ID" value="ENSG00000162419.13"/>
</dbReference>
<dbReference type="Ensembl" id="ENST00000361872.8">
    <molecule id="Q9Y692-2"/>
    <property type="protein sequence ID" value="ENSP00000355186.4"/>
    <property type="gene ID" value="ENSG00000162419.13"/>
</dbReference>
<dbReference type="Ensembl" id="ENST00000373816.6">
    <molecule id="Q9Y692-2"/>
    <property type="protein sequence ID" value="ENSP00000362922.1"/>
    <property type="gene ID" value="ENSG00000162419.13"/>
</dbReference>
<dbReference type="GeneID" id="10691"/>
<dbReference type="KEGG" id="hsa:10691"/>
<dbReference type="MANE-Select" id="ENST00000373816.6">
    <molecule id="Q9Y692-2"/>
    <property type="protein sequence ID" value="ENSP00000362922.1"/>
    <property type="RefSeq nucleotide sequence ID" value="NM_001319674.2"/>
    <property type="RefSeq protein sequence ID" value="NP_001306603.1"/>
</dbReference>
<dbReference type="UCSC" id="uc001bqz.4">
    <molecule id="Q9Y692-1"/>
    <property type="organism name" value="human"/>
</dbReference>
<dbReference type="AGR" id="HGNC:4370"/>
<dbReference type="CTD" id="10691"/>
<dbReference type="DisGeNET" id="10691"/>
<dbReference type="GeneCards" id="GMEB1"/>
<dbReference type="HGNC" id="HGNC:4370">
    <property type="gene designation" value="GMEB1"/>
</dbReference>
<dbReference type="HPA" id="ENSG00000162419">
    <property type="expression patterns" value="Low tissue specificity"/>
</dbReference>
<dbReference type="MIM" id="604409">
    <property type="type" value="gene"/>
</dbReference>
<dbReference type="neXtProt" id="NX_Q9Y692"/>
<dbReference type="OpenTargets" id="ENSG00000162419"/>
<dbReference type="PharmGKB" id="PA28755"/>
<dbReference type="VEuPathDB" id="HostDB:ENSG00000162419"/>
<dbReference type="eggNOG" id="KOG4333">
    <property type="taxonomic scope" value="Eukaryota"/>
</dbReference>
<dbReference type="GeneTree" id="ENSGT00410000025596"/>
<dbReference type="HOGENOM" id="CLU_030344_1_0_1"/>
<dbReference type="InParanoid" id="Q9Y692"/>
<dbReference type="OMA" id="SPINQQA"/>
<dbReference type="OrthoDB" id="5792412at2759"/>
<dbReference type="PAN-GO" id="Q9Y692">
    <property type="GO annotations" value="3 GO annotations based on evolutionary models"/>
</dbReference>
<dbReference type="PhylomeDB" id="Q9Y692"/>
<dbReference type="TreeFam" id="TF317090"/>
<dbReference type="PathwayCommons" id="Q9Y692"/>
<dbReference type="SignaLink" id="Q9Y692"/>
<dbReference type="BioGRID-ORCS" id="10691">
    <property type="hits" value="31 hits in 1179 CRISPR screens"/>
</dbReference>
<dbReference type="ChiTaRS" id="GMEB1">
    <property type="organism name" value="human"/>
</dbReference>
<dbReference type="EvolutionaryTrace" id="Q9Y692"/>
<dbReference type="GeneWiki" id="GMEB1"/>
<dbReference type="GenomeRNAi" id="10691"/>
<dbReference type="Pharos" id="Q9Y692">
    <property type="development level" value="Tbio"/>
</dbReference>
<dbReference type="PRO" id="PR:Q9Y692"/>
<dbReference type="Proteomes" id="UP000005640">
    <property type="component" value="Chromosome 1"/>
</dbReference>
<dbReference type="RNAct" id="Q9Y692">
    <property type="molecule type" value="protein"/>
</dbReference>
<dbReference type="Bgee" id="ENSG00000162419">
    <property type="expression patterns" value="Expressed in endothelial cell and 182 other cell types or tissues"/>
</dbReference>
<dbReference type="ExpressionAtlas" id="Q9Y692">
    <property type="expression patterns" value="baseline and differential"/>
</dbReference>
<dbReference type="GO" id="GO:0000785">
    <property type="term" value="C:chromatin"/>
    <property type="evidence" value="ECO:0000247"/>
    <property type="project" value="NTNU_SB"/>
</dbReference>
<dbReference type="GO" id="GO:0005737">
    <property type="term" value="C:cytoplasm"/>
    <property type="evidence" value="ECO:0007669"/>
    <property type="project" value="UniProtKB-SubCell"/>
</dbReference>
<dbReference type="GO" id="GO:0005654">
    <property type="term" value="C:nucleoplasm"/>
    <property type="evidence" value="ECO:0000314"/>
    <property type="project" value="HPA"/>
</dbReference>
<dbReference type="GO" id="GO:0005634">
    <property type="term" value="C:nucleus"/>
    <property type="evidence" value="ECO:0000314"/>
    <property type="project" value="ARUK-UCL"/>
</dbReference>
<dbReference type="GO" id="GO:0001228">
    <property type="term" value="F:DNA-binding transcription activator activity, RNA polymerase II-specific"/>
    <property type="evidence" value="ECO:0000304"/>
    <property type="project" value="ARUK-UCL"/>
</dbReference>
<dbReference type="GO" id="GO:0000981">
    <property type="term" value="F:DNA-binding transcription factor activity, RNA polymerase II-specific"/>
    <property type="evidence" value="ECO:0000247"/>
    <property type="project" value="NTNU_SB"/>
</dbReference>
<dbReference type="GO" id="GO:0051008">
    <property type="term" value="F:Hsp27 protein binding"/>
    <property type="evidence" value="ECO:0000353"/>
    <property type="project" value="ARUK-UCL"/>
</dbReference>
<dbReference type="GO" id="GO:0042802">
    <property type="term" value="F:identical protein binding"/>
    <property type="evidence" value="ECO:0000353"/>
    <property type="project" value="IntAct"/>
</dbReference>
<dbReference type="GO" id="GO:0046872">
    <property type="term" value="F:metal ion binding"/>
    <property type="evidence" value="ECO:0007669"/>
    <property type="project" value="UniProtKB-KW"/>
</dbReference>
<dbReference type="GO" id="GO:0000978">
    <property type="term" value="F:RNA polymerase II cis-regulatory region sequence-specific DNA binding"/>
    <property type="evidence" value="ECO:0000314"/>
    <property type="project" value="ARUK-UCL"/>
</dbReference>
<dbReference type="GO" id="GO:1990837">
    <property type="term" value="F:sequence-specific double-stranded DNA binding"/>
    <property type="evidence" value="ECO:0000314"/>
    <property type="project" value="ARUK-UCL"/>
</dbReference>
<dbReference type="GO" id="GO:0006357">
    <property type="term" value="P:regulation of transcription by RNA polymerase II"/>
    <property type="evidence" value="ECO:0000318"/>
    <property type="project" value="GO_Central"/>
</dbReference>
<dbReference type="FunFam" id="3.10.390.10:FF:000003">
    <property type="entry name" value="glucocorticoid modulatory element-binding protein 1 isoform X2"/>
    <property type="match status" value="1"/>
</dbReference>
<dbReference type="Gene3D" id="3.10.390.10">
    <property type="entry name" value="SAND domain-like"/>
    <property type="match status" value="1"/>
</dbReference>
<dbReference type="InterPro" id="IPR010919">
    <property type="entry name" value="SAND-like_dom_sf"/>
</dbReference>
<dbReference type="InterPro" id="IPR000770">
    <property type="entry name" value="SAND_dom"/>
</dbReference>
<dbReference type="PANTHER" id="PTHR10417">
    <property type="entry name" value="GLUCOCORTICOID MODULATORY ELEMENT-BINDING PROTEIN"/>
    <property type="match status" value="1"/>
</dbReference>
<dbReference type="PANTHER" id="PTHR10417:SF3">
    <property type="entry name" value="GLUCOCORTICOID MODULATORY ELEMENT-BINDING PROTEIN 1"/>
    <property type="match status" value="1"/>
</dbReference>
<dbReference type="Pfam" id="PF01342">
    <property type="entry name" value="SAND"/>
    <property type="match status" value="1"/>
</dbReference>
<dbReference type="SMART" id="SM00258">
    <property type="entry name" value="SAND"/>
    <property type="match status" value="1"/>
</dbReference>
<dbReference type="SUPFAM" id="SSF63763">
    <property type="entry name" value="SAND domain-like"/>
    <property type="match status" value="1"/>
</dbReference>
<dbReference type="PROSITE" id="PS50864">
    <property type="entry name" value="SAND"/>
    <property type="match status" value="1"/>
</dbReference>
<feature type="initiator methionine" description="Removed" evidence="10">
    <location>
        <position position="1"/>
    </location>
</feature>
<feature type="chain" id="PRO_0000074089" description="Glucocorticoid modulatory element-binding protein 1">
    <location>
        <begin position="2"/>
        <end position="573"/>
    </location>
</feature>
<feature type="domain" description="SAND" evidence="3">
    <location>
        <begin position="82"/>
        <end position="166"/>
    </location>
</feature>
<feature type="region of interest" description="Disordered" evidence="4">
    <location>
        <begin position="370"/>
        <end position="398"/>
    </location>
</feature>
<feature type="coiled-coil region" evidence="2">
    <location>
        <begin position="321"/>
        <end position="367"/>
    </location>
</feature>
<feature type="binding site">
    <location>
        <position position="113"/>
    </location>
    <ligand>
        <name>Zn(2+)</name>
        <dbReference type="ChEBI" id="CHEBI:29105"/>
    </ligand>
</feature>
<feature type="binding site">
    <location>
        <position position="139"/>
    </location>
    <ligand>
        <name>DNA</name>
        <dbReference type="ChEBI" id="CHEBI:16991"/>
    </ligand>
</feature>
<feature type="binding site">
    <location>
        <position position="143"/>
    </location>
    <ligand>
        <name>DNA</name>
        <dbReference type="ChEBI" id="CHEBI:16991"/>
    </ligand>
</feature>
<feature type="binding site">
    <location>
        <position position="146"/>
    </location>
    <ligand>
        <name>DNA</name>
        <dbReference type="ChEBI" id="CHEBI:16991"/>
    </ligand>
</feature>
<feature type="binding site">
    <location>
        <position position="157"/>
    </location>
    <ligand>
        <name>DNA</name>
        <dbReference type="ChEBI" id="CHEBI:16991"/>
    </ligand>
</feature>
<feature type="binding site">
    <location>
        <position position="170"/>
    </location>
    <ligand>
        <name>Zn(2+)</name>
        <dbReference type="ChEBI" id="CHEBI:29105"/>
    </ligand>
</feature>
<feature type="binding site">
    <location>
        <position position="174"/>
    </location>
    <ligand>
        <name>Zn(2+)</name>
        <dbReference type="ChEBI" id="CHEBI:29105"/>
    </ligand>
</feature>
<feature type="binding site">
    <location>
        <position position="178"/>
    </location>
    <ligand>
        <name>Zn(2+)</name>
        <dbReference type="ChEBI" id="CHEBI:29105"/>
    </ligand>
</feature>
<feature type="modified residue" description="N-acetylalanine" evidence="10">
    <location>
        <position position="2"/>
    </location>
</feature>
<feature type="splice variant" id="VSP_005970" description="In isoform 2." evidence="5 6 7 8">
    <location>
        <begin position="44"/>
        <end position="53"/>
    </location>
</feature>
<feature type="sequence variant" id="VAR_051894" description="In dbSNP:rs11557120.">
    <original>V</original>
    <variation>A</variation>
    <location>
        <position position="14"/>
    </location>
</feature>
<feature type="sequence conflict" description="In Ref. 1; AAD39355." evidence="9" ref="1">
    <original>Q</original>
    <variation>E</variation>
    <location>
        <position position="401"/>
    </location>
</feature>
<feature type="sequence conflict" description="In Ref. 4; BAA91410." evidence="9" ref="4">
    <original>V</original>
    <variation>M</variation>
    <location>
        <position position="463"/>
    </location>
</feature>
<feature type="sequence conflict" description="In Ref. 4; BAA91410." evidence="9" ref="4">
    <original>T</original>
    <variation>I</variation>
    <location>
        <position position="548"/>
    </location>
</feature>
<feature type="strand" evidence="11">
    <location>
        <begin position="92"/>
        <end position="99"/>
    </location>
</feature>
<feature type="strand" evidence="11">
    <location>
        <begin position="102"/>
        <end position="107"/>
    </location>
</feature>
<feature type="helix" evidence="11">
    <location>
        <begin position="108"/>
        <end position="110"/>
    </location>
</feature>
<feature type="strand" evidence="11">
    <location>
        <begin position="121"/>
        <end position="123"/>
    </location>
</feature>
<feature type="strand" evidence="11">
    <location>
        <begin position="126"/>
        <end position="128"/>
    </location>
</feature>
<feature type="helix" evidence="11">
    <location>
        <begin position="130"/>
        <end position="136"/>
    </location>
</feature>
<feature type="helix" evidence="11">
    <location>
        <begin position="140"/>
        <end position="142"/>
    </location>
</feature>
<feature type="helix" evidence="11">
    <location>
        <begin position="145"/>
        <end position="148"/>
    </location>
</feature>
<feature type="strand" evidence="11">
    <location>
        <begin position="149"/>
        <end position="151"/>
    </location>
</feature>
<feature type="helix" evidence="11">
    <location>
        <begin position="156"/>
        <end position="161"/>
    </location>
</feature>
<feature type="turn" evidence="11">
    <location>
        <begin position="168"/>
        <end position="172"/>
    </location>
</feature>
<organism>
    <name type="scientific">Homo sapiens</name>
    <name type="common">Human</name>
    <dbReference type="NCBI Taxonomy" id="9606"/>
    <lineage>
        <taxon>Eukaryota</taxon>
        <taxon>Metazoa</taxon>
        <taxon>Chordata</taxon>
        <taxon>Craniata</taxon>
        <taxon>Vertebrata</taxon>
        <taxon>Euteleostomi</taxon>
        <taxon>Mammalia</taxon>
        <taxon>Eutheria</taxon>
        <taxon>Euarchontoglires</taxon>
        <taxon>Primates</taxon>
        <taxon>Haplorrhini</taxon>
        <taxon>Catarrhini</taxon>
        <taxon>Hominidae</taxon>
        <taxon>Homo</taxon>
    </lineage>
</organism>
<protein>
    <recommendedName>
        <fullName>Glucocorticoid modulatory element-binding protein 1</fullName>
        <shortName>GMEB-1</shortName>
    </recommendedName>
    <alternativeName>
        <fullName>DNA-binding protein p96PIF</fullName>
    </alternativeName>
    <alternativeName>
        <fullName>Parvovirus initiation factor p96</fullName>
        <shortName>PIF p96</shortName>
    </alternativeName>
</protein>
<evidence type="ECO:0000250" key="1"/>
<evidence type="ECO:0000255" key="2"/>
<evidence type="ECO:0000255" key="3">
    <source>
        <dbReference type="PROSITE-ProRule" id="PRU00185"/>
    </source>
</evidence>
<evidence type="ECO:0000256" key="4">
    <source>
        <dbReference type="SAM" id="MobiDB-lite"/>
    </source>
</evidence>
<evidence type="ECO:0000303" key="5">
    <source>
    </source>
</evidence>
<evidence type="ECO:0000303" key="6">
    <source>
    </source>
</evidence>
<evidence type="ECO:0000303" key="7">
    <source>
    </source>
</evidence>
<evidence type="ECO:0000303" key="8">
    <source>
    </source>
</evidence>
<evidence type="ECO:0000305" key="9"/>
<evidence type="ECO:0007744" key="10">
    <source>
    </source>
</evidence>
<evidence type="ECO:0007829" key="11">
    <source>
        <dbReference type="PDB" id="1OQJ"/>
    </source>
</evidence>
<accession>Q9Y692</accession>
<accession>B1AT48</accession>
<accession>Q9NWH1</accession>
<accession>Q9UKD0</accession>
<keyword id="KW-0002">3D-structure</keyword>
<keyword id="KW-0007">Acetylation</keyword>
<keyword id="KW-0025">Alternative splicing</keyword>
<keyword id="KW-0175">Coiled coil</keyword>
<keyword id="KW-0963">Cytoplasm</keyword>
<keyword id="KW-0903">Direct protein sequencing</keyword>
<keyword id="KW-0238">DNA-binding</keyword>
<keyword id="KW-0479">Metal-binding</keyword>
<keyword id="KW-0539">Nucleus</keyword>
<keyword id="KW-1267">Proteomics identification</keyword>
<keyword id="KW-1185">Reference proteome</keyword>
<keyword id="KW-0804">Transcription</keyword>
<keyword id="KW-0805">Transcription regulation</keyword>
<keyword id="KW-0862">Zinc</keyword>
<comment type="function">
    <text>Trans-acting factor that binds to glucocorticoid modulatory elements (GME) present in the TAT (tyrosine aminotransferase) promoter and increases sensitivity to low concentrations of glucocorticoids. Also binds to the transferrin receptor promoter. Essential auxiliary factor for the replication of parvoviruses.</text>
</comment>
<comment type="subunit">
    <text evidence="1">Homodimer, and heterodimer of GMEB1 and GMEB2. GMEB1 and GMEB2 form the parvovirus initiator complex (PIF). Interacts with the glucocorticoid receptor (NR3C1) and NCOA2/TIF2 (By similarity). May interact with HSP27 and CREB-binding protein (CBP).</text>
</comment>
<comment type="interaction">
    <interactant intactId="EBI-2339665">
        <id>Q9Y692</id>
    </interactant>
    <interactant intactId="EBI-948296">
        <id>Q9UKD1</id>
        <label>GMEB2</label>
    </interactant>
    <organismsDiffer>false</organismsDiffer>
    <experiments>2</experiments>
</comment>
<comment type="interaction">
    <interactant intactId="EBI-2339665">
        <id>Q9Y692</id>
    </interactant>
    <interactant intactId="EBI-357631">
        <id>Q13114</id>
        <label>TRAF3</label>
    </interactant>
    <organismsDiffer>false</organismsDiffer>
    <experiments>2</experiments>
</comment>
<comment type="interaction">
    <interactant intactId="EBI-21554939">
        <id>Q9Y692-2</id>
    </interactant>
    <interactant intactId="EBI-21554939">
        <id>Q9Y692-2</id>
        <label>GMEB1</label>
    </interactant>
    <organismsDiffer>false</organismsDiffer>
    <experiments>2</experiments>
</comment>
<comment type="interaction">
    <interactant intactId="EBI-21554939">
        <id>Q9Y692-2</id>
    </interactant>
    <interactant intactId="EBI-25780616">
        <id>O88873</id>
        <label>Gmeb2</label>
    </interactant>
    <organismsDiffer>true</organismsDiffer>
    <experiments>5</experiments>
</comment>
<comment type="subcellular location">
    <subcellularLocation>
        <location>Nucleus</location>
    </subcellularLocation>
    <subcellularLocation>
        <location>Cytoplasm</location>
    </subcellularLocation>
    <text>May be also cytoplasmic.</text>
</comment>
<comment type="alternative products">
    <event type="alternative splicing"/>
    <isoform>
        <id>Q9Y692-1</id>
        <name>1</name>
        <sequence type="displayed"/>
    </isoform>
    <isoform>
        <id>Q9Y692-2</id>
        <name>2</name>
        <sequence type="described" ref="VSP_005970"/>
    </isoform>
</comment>
<proteinExistence type="evidence at protein level"/>
<reference key="1">
    <citation type="journal article" date="1999" name="FEBS Lett.">
        <title>Cloning and characterization of hGMEB1, a novel glucocorticoid modulatory element binding protein.</title>
        <authorList>
            <person name="Theriault J.R."/>
            <person name="Charette S.J."/>
            <person name="Lambert H."/>
            <person name="Landry J."/>
        </authorList>
    </citation>
    <scope>NUCLEOTIDE SEQUENCE [MRNA] (ISOFORM 1)</scope>
    <source>
        <tissue>Cervix carcinoma</tissue>
    </source>
</reference>
<reference key="2">
    <citation type="journal article" date="1999" name="Mol. Cell. Biol.">
        <title>Two new members of the emerging KDWK family of combinatorial transcription modulators bind as a heterodimer to flexibly spaced PuCGPy half-sites.</title>
        <authorList>
            <person name="Christensen J."/>
            <person name="Cotmore S.F."/>
            <person name="Tattersall P."/>
        </authorList>
    </citation>
    <scope>NUCLEOTIDE SEQUENCE [MRNA] (ISOFORM 2)</scope>
    <scope>PROTEIN SEQUENCE OF 159-172</scope>
    <source>
        <tissue>Cervix carcinoma</tissue>
    </source>
</reference>
<reference key="3">
    <citation type="journal article" date="2000" name="Mol. Endocrinol.">
        <title>Properties of the glucocorticoid modulatory element binding proteins GMEB-1 and -2: potential new modifiers of glucocorticoid receptor transactivation and members of the family of KDWK proteins.</title>
        <authorList>
            <person name="Kaul S."/>
            <person name="Blackford J.A. Jr."/>
            <person name="Chen J."/>
            <person name="Ogryzko V.V."/>
            <person name="Simons S.S. Jr."/>
        </authorList>
    </citation>
    <scope>NUCLEOTIDE SEQUENCE [MRNA] (ISOFORM 2)</scope>
    <source>
        <tissue>Heart</tissue>
    </source>
</reference>
<reference key="4">
    <citation type="journal article" date="2004" name="Nat. Genet.">
        <title>Complete sequencing and characterization of 21,243 full-length human cDNAs.</title>
        <authorList>
            <person name="Ota T."/>
            <person name="Suzuki Y."/>
            <person name="Nishikawa T."/>
            <person name="Otsuki T."/>
            <person name="Sugiyama T."/>
            <person name="Irie R."/>
            <person name="Wakamatsu A."/>
            <person name="Hayashi K."/>
            <person name="Sato H."/>
            <person name="Nagai K."/>
            <person name="Kimura K."/>
            <person name="Makita H."/>
            <person name="Sekine M."/>
            <person name="Obayashi M."/>
            <person name="Nishi T."/>
            <person name="Shibahara T."/>
            <person name="Tanaka T."/>
            <person name="Ishii S."/>
            <person name="Yamamoto J."/>
            <person name="Saito K."/>
            <person name="Kawai Y."/>
            <person name="Isono Y."/>
            <person name="Nakamura Y."/>
            <person name="Nagahari K."/>
            <person name="Murakami K."/>
            <person name="Yasuda T."/>
            <person name="Iwayanagi T."/>
            <person name="Wagatsuma M."/>
            <person name="Shiratori A."/>
            <person name="Sudo H."/>
            <person name="Hosoiri T."/>
            <person name="Kaku Y."/>
            <person name="Kodaira H."/>
            <person name="Kondo H."/>
            <person name="Sugawara M."/>
            <person name="Takahashi M."/>
            <person name="Kanda K."/>
            <person name="Yokoi T."/>
            <person name="Furuya T."/>
            <person name="Kikkawa E."/>
            <person name="Omura Y."/>
            <person name="Abe K."/>
            <person name="Kamihara K."/>
            <person name="Katsuta N."/>
            <person name="Sato K."/>
            <person name="Tanikawa M."/>
            <person name="Yamazaki M."/>
            <person name="Ninomiya K."/>
            <person name="Ishibashi T."/>
            <person name="Yamashita H."/>
            <person name="Murakawa K."/>
            <person name="Fujimori K."/>
            <person name="Tanai H."/>
            <person name="Kimata M."/>
            <person name="Watanabe M."/>
            <person name="Hiraoka S."/>
            <person name="Chiba Y."/>
            <person name="Ishida S."/>
            <person name="Ono Y."/>
            <person name="Takiguchi S."/>
            <person name="Watanabe S."/>
            <person name="Yosida M."/>
            <person name="Hotuta T."/>
            <person name="Kusano J."/>
            <person name="Kanehori K."/>
            <person name="Takahashi-Fujii A."/>
            <person name="Hara H."/>
            <person name="Tanase T.-O."/>
            <person name="Nomura Y."/>
            <person name="Togiya S."/>
            <person name="Komai F."/>
            <person name="Hara R."/>
            <person name="Takeuchi K."/>
            <person name="Arita M."/>
            <person name="Imose N."/>
            <person name="Musashino K."/>
            <person name="Yuuki H."/>
            <person name="Oshima A."/>
            <person name="Sasaki N."/>
            <person name="Aotsuka S."/>
            <person name="Yoshikawa Y."/>
            <person name="Matsunawa H."/>
            <person name="Ichihara T."/>
            <person name="Shiohata N."/>
            <person name="Sano S."/>
            <person name="Moriya S."/>
            <person name="Momiyama H."/>
            <person name="Satoh N."/>
            <person name="Takami S."/>
            <person name="Terashima Y."/>
            <person name="Suzuki O."/>
            <person name="Nakagawa S."/>
            <person name="Senoh A."/>
            <person name="Mizoguchi H."/>
            <person name="Goto Y."/>
            <person name="Shimizu F."/>
            <person name="Wakebe H."/>
            <person name="Hishigaki H."/>
            <person name="Watanabe T."/>
            <person name="Sugiyama A."/>
            <person name="Takemoto M."/>
            <person name="Kawakami B."/>
            <person name="Yamazaki M."/>
            <person name="Watanabe K."/>
            <person name="Kumagai A."/>
            <person name="Itakura S."/>
            <person name="Fukuzumi Y."/>
            <person name="Fujimori Y."/>
            <person name="Komiyama M."/>
            <person name="Tashiro H."/>
            <person name="Tanigami A."/>
            <person name="Fujiwara T."/>
            <person name="Ono T."/>
            <person name="Yamada K."/>
            <person name="Fujii Y."/>
            <person name="Ozaki K."/>
            <person name="Hirao M."/>
            <person name="Ohmori Y."/>
            <person name="Kawabata A."/>
            <person name="Hikiji T."/>
            <person name="Kobatake N."/>
            <person name="Inagaki H."/>
            <person name="Ikema Y."/>
            <person name="Okamoto S."/>
            <person name="Okitani R."/>
            <person name="Kawakami T."/>
            <person name="Noguchi S."/>
            <person name="Itoh T."/>
            <person name="Shigeta K."/>
            <person name="Senba T."/>
            <person name="Matsumura K."/>
            <person name="Nakajima Y."/>
            <person name="Mizuno T."/>
            <person name="Morinaga M."/>
            <person name="Sasaki M."/>
            <person name="Togashi T."/>
            <person name="Oyama M."/>
            <person name="Hata H."/>
            <person name="Watanabe M."/>
            <person name="Komatsu T."/>
            <person name="Mizushima-Sugano J."/>
            <person name="Satoh T."/>
            <person name="Shirai Y."/>
            <person name="Takahashi Y."/>
            <person name="Nakagawa K."/>
            <person name="Okumura K."/>
            <person name="Nagase T."/>
            <person name="Nomura N."/>
            <person name="Kikuchi H."/>
            <person name="Masuho Y."/>
            <person name="Yamashita R."/>
            <person name="Nakai K."/>
            <person name="Yada T."/>
            <person name="Nakamura Y."/>
            <person name="Ohara O."/>
            <person name="Isogai T."/>
            <person name="Sugano S."/>
        </authorList>
    </citation>
    <scope>NUCLEOTIDE SEQUENCE [LARGE SCALE MRNA] (ISOFORM 2)</scope>
    <source>
        <tissue>Embryo</tissue>
    </source>
</reference>
<reference key="5">
    <citation type="journal article" date="2006" name="Nature">
        <title>The DNA sequence and biological annotation of human chromosome 1.</title>
        <authorList>
            <person name="Gregory S.G."/>
            <person name="Barlow K.F."/>
            <person name="McLay K.E."/>
            <person name="Kaul R."/>
            <person name="Swarbreck D."/>
            <person name="Dunham A."/>
            <person name="Scott C.E."/>
            <person name="Howe K.L."/>
            <person name="Woodfine K."/>
            <person name="Spencer C.C.A."/>
            <person name="Jones M.C."/>
            <person name="Gillson C."/>
            <person name="Searle S."/>
            <person name="Zhou Y."/>
            <person name="Kokocinski F."/>
            <person name="McDonald L."/>
            <person name="Evans R."/>
            <person name="Phillips K."/>
            <person name="Atkinson A."/>
            <person name="Cooper R."/>
            <person name="Jones C."/>
            <person name="Hall R.E."/>
            <person name="Andrews T.D."/>
            <person name="Lloyd C."/>
            <person name="Ainscough R."/>
            <person name="Almeida J.P."/>
            <person name="Ambrose K.D."/>
            <person name="Anderson F."/>
            <person name="Andrew R.W."/>
            <person name="Ashwell R.I.S."/>
            <person name="Aubin K."/>
            <person name="Babbage A.K."/>
            <person name="Bagguley C.L."/>
            <person name="Bailey J."/>
            <person name="Beasley H."/>
            <person name="Bethel G."/>
            <person name="Bird C.P."/>
            <person name="Bray-Allen S."/>
            <person name="Brown J.Y."/>
            <person name="Brown A.J."/>
            <person name="Buckley D."/>
            <person name="Burton J."/>
            <person name="Bye J."/>
            <person name="Carder C."/>
            <person name="Chapman J.C."/>
            <person name="Clark S.Y."/>
            <person name="Clarke G."/>
            <person name="Clee C."/>
            <person name="Cobley V."/>
            <person name="Collier R.E."/>
            <person name="Corby N."/>
            <person name="Coville G.J."/>
            <person name="Davies J."/>
            <person name="Deadman R."/>
            <person name="Dunn M."/>
            <person name="Earthrowl M."/>
            <person name="Ellington A.G."/>
            <person name="Errington H."/>
            <person name="Frankish A."/>
            <person name="Frankland J."/>
            <person name="French L."/>
            <person name="Garner P."/>
            <person name="Garnett J."/>
            <person name="Gay L."/>
            <person name="Ghori M.R.J."/>
            <person name="Gibson R."/>
            <person name="Gilby L.M."/>
            <person name="Gillett W."/>
            <person name="Glithero R.J."/>
            <person name="Grafham D.V."/>
            <person name="Griffiths C."/>
            <person name="Griffiths-Jones S."/>
            <person name="Grocock R."/>
            <person name="Hammond S."/>
            <person name="Harrison E.S.I."/>
            <person name="Hart E."/>
            <person name="Haugen E."/>
            <person name="Heath P.D."/>
            <person name="Holmes S."/>
            <person name="Holt K."/>
            <person name="Howden P.J."/>
            <person name="Hunt A.R."/>
            <person name="Hunt S.E."/>
            <person name="Hunter G."/>
            <person name="Isherwood J."/>
            <person name="James R."/>
            <person name="Johnson C."/>
            <person name="Johnson D."/>
            <person name="Joy A."/>
            <person name="Kay M."/>
            <person name="Kershaw J.K."/>
            <person name="Kibukawa M."/>
            <person name="Kimberley A.M."/>
            <person name="King A."/>
            <person name="Knights A.J."/>
            <person name="Lad H."/>
            <person name="Laird G."/>
            <person name="Lawlor S."/>
            <person name="Leongamornlert D.A."/>
            <person name="Lloyd D.M."/>
            <person name="Loveland J."/>
            <person name="Lovell J."/>
            <person name="Lush M.J."/>
            <person name="Lyne R."/>
            <person name="Martin S."/>
            <person name="Mashreghi-Mohammadi M."/>
            <person name="Matthews L."/>
            <person name="Matthews N.S.W."/>
            <person name="McLaren S."/>
            <person name="Milne S."/>
            <person name="Mistry S."/>
            <person name="Moore M.J.F."/>
            <person name="Nickerson T."/>
            <person name="O'Dell C.N."/>
            <person name="Oliver K."/>
            <person name="Palmeiri A."/>
            <person name="Palmer S.A."/>
            <person name="Parker A."/>
            <person name="Patel D."/>
            <person name="Pearce A.V."/>
            <person name="Peck A.I."/>
            <person name="Pelan S."/>
            <person name="Phelps K."/>
            <person name="Phillimore B.J."/>
            <person name="Plumb R."/>
            <person name="Rajan J."/>
            <person name="Raymond C."/>
            <person name="Rouse G."/>
            <person name="Saenphimmachak C."/>
            <person name="Sehra H.K."/>
            <person name="Sheridan E."/>
            <person name="Shownkeen R."/>
            <person name="Sims S."/>
            <person name="Skuce C.D."/>
            <person name="Smith M."/>
            <person name="Steward C."/>
            <person name="Subramanian S."/>
            <person name="Sycamore N."/>
            <person name="Tracey A."/>
            <person name="Tromans A."/>
            <person name="Van Helmond Z."/>
            <person name="Wall M."/>
            <person name="Wallis J.M."/>
            <person name="White S."/>
            <person name="Whitehead S.L."/>
            <person name="Wilkinson J.E."/>
            <person name="Willey D.L."/>
            <person name="Williams H."/>
            <person name="Wilming L."/>
            <person name="Wray P.W."/>
            <person name="Wu Z."/>
            <person name="Coulson A."/>
            <person name="Vaudin M."/>
            <person name="Sulston J.E."/>
            <person name="Durbin R.M."/>
            <person name="Hubbard T."/>
            <person name="Wooster R."/>
            <person name="Dunham I."/>
            <person name="Carter N.P."/>
            <person name="McVean G."/>
            <person name="Ross M.T."/>
            <person name="Harrow J."/>
            <person name="Olson M.V."/>
            <person name="Beck S."/>
            <person name="Rogers J."/>
            <person name="Bentley D.R."/>
        </authorList>
    </citation>
    <scope>NUCLEOTIDE SEQUENCE [LARGE SCALE GENOMIC DNA]</scope>
</reference>
<reference key="6">
    <citation type="submission" date="2005-09" db="EMBL/GenBank/DDBJ databases">
        <authorList>
            <person name="Mural R.J."/>
            <person name="Istrail S."/>
            <person name="Sutton G.G."/>
            <person name="Florea L."/>
            <person name="Halpern A.L."/>
            <person name="Mobarry C.M."/>
            <person name="Lippert R."/>
            <person name="Walenz B."/>
            <person name="Shatkay H."/>
            <person name="Dew I."/>
            <person name="Miller J.R."/>
            <person name="Flanigan M.J."/>
            <person name="Edwards N.J."/>
            <person name="Bolanos R."/>
            <person name="Fasulo D."/>
            <person name="Halldorsson B.V."/>
            <person name="Hannenhalli S."/>
            <person name="Turner R."/>
            <person name="Yooseph S."/>
            <person name="Lu F."/>
            <person name="Nusskern D.R."/>
            <person name="Shue B.C."/>
            <person name="Zheng X.H."/>
            <person name="Zhong F."/>
            <person name="Delcher A.L."/>
            <person name="Huson D.H."/>
            <person name="Kravitz S.A."/>
            <person name="Mouchard L."/>
            <person name="Reinert K."/>
            <person name="Remington K.A."/>
            <person name="Clark A.G."/>
            <person name="Waterman M.S."/>
            <person name="Eichler E.E."/>
            <person name="Adams M.D."/>
            <person name="Hunkapiller M.W."/>
            <person name="Myers E.W."/>
            <person name="Venter J.C."/>
        </authorList>
    </citation>
    <scope>NUCLEOTIDE SEQUENCE [LARGE SCALE GENOMIC DNA]</scope>
</reference>
<reference key="7">
    <citation type="journal article" date="2004" name="Genome Res.">
        <title>The status, quality, and expansion of the NIH full-length cDNA project: the Mammalian Gene Collection (MGC).</title>
        <authorList>
            <consortium name="The MGC Project Team"/>
        </authorList>
    </citation>
    <scope>NUCLEOTIDE SEQUENCE [LARGE SCALE MRNA] (ISOFORM 2)</scope>
    <source>
        <tissue>Trophoblast</tissue>
    </source>
</reference>
<reference key="8">
    <citation type="journal article" date="2009" name="Anal. Chem.">
        <title>Lys-N and trypsin cover complementary parts of the phosphoproteome in a refined SCX-based approach.</title>
        <authorList>
            <person name="Gauci S."/>
            <person name="Helbig A.O."/>
            <person name="Slijper M."/>
            <person name="Krijgsveld J."/>
            <person name="Heck A.J."/>
            <person name="Mohammed S."/>
        </authorList>
    </citation>
    <scope>ACETYLATION [LARGE SCALE ANALYSIS] AT ALA-2</scope>
    <scope>CLEAVAGE OF INITIATOR METHIONINE [LARGE SCALE ANALYSIS]</scope>
    <scope>IDENTIFICATION BY MASS SPECTROMETRY [LARGE SCALE ANALYSIS]</scope>
</reference>
<reference key="9">
    <citation type="journal article" date="2003" name="Mol. Endocrinol.">
        <title>Crystal structure and nuclear magnetic resonance analyses of the SAND domain from glucocorticoid modulatory element binding protein-1 reveals deoxyribonucleic acid and zinc binding regions.</title>
        <authorList>
            <person name="Surdo P.L."/>
            <person name="Bottomley M.J."/>
            <person name="Sattler M."/>
            <person name="Scheffzek K."/>
        </authorList>
    </citation>
    <scope>X-RAY CRYSTALLOGRAPHY (1.55 ANGSTROMS) OF 87-182</scope>
    <scope>DNA-BINDING</scope>
    <scope>ZINC-BINDING</scope>
</reference>
<sequence>MANAEVSVPVGDVVVVPTEGNEGENPEDTKTQVILQLQPVQQGLFIDGHFYNRIYEAGSENNTAVVAVETHTIHKIEEGIDTGTIEANEDMEIAYPITCGESKAILLWKKFVCPGINVKCVKFNDQLISPKHFVHLAGKSTLKDWKRAIRLGGIMLRKMMDSGQIDFYQHDKVCSNTCRSTKFDLLISSARAPVPGQQTSVVQTPTSADGSITQIAISEESMEEAGLEWNSALTAAVTMATEEGVKKDSEEISEDTLMFWKGIADVGLMEEVVCNIQKEIEELLRGVQQRLIQAPFQVTDAAVLNNVAHTFGLMDTVKKVLDNRRNQVEQGEEQFLYTLTDLERQLEEQKKQGQDHRLKSQTVQNVVLMPVSTPKPPKRPRLQRPASTTVLSPSPPVQQPQFTVISPITITPVGQSFSMGNIPVATLSQGSSPVTVHTLPSGPQLFRYATVVSSAKSSSPDTVTIHPSSSLALLSSTAMQDGSTLGNMTTMVSPVELVAMESGLTSAIQAVESTSEDGQTIIEIDPAPDPEAEDTEGKAVILETELRTEEKVVAEMEEHQHQVHNVEIVVLED</sequence>
<name>GMEB1_HUMAN</name>